<proteinExistence type="inferred from homology"/>
<name>Y3341_YERPB</name>
<dbReference type="EMBL" id="CP001048">
    <property type="protein sequence ID" value="ACC90296.1"/>
    <property type="molecule type" value="Genomic_DNA"/>
</dbReference>
<dbReference type="RefSeq" id="WP_011192971.1">
    <property type="nucleotide sequence ID" value="NZ_CP009780.1"/>
</dbReference>
<dbReference type="SMR" id="B2K0T3"/>
<dbReference type="KEGG" id="ypb:YPTS_3341"/>
<dbReference type="PATRIC" id="fig|502801.10.peg.2782"/>
<dbReference type="GO" id="GO:0005829">
    <property type="term" value="C:cytosol"/>
    <property type="evidence" value="ECO:0007669"/>
    <property type="project" value="TreeGrafter"/>
</dbReference>
<dbReference type="Gene3D" id="3.40.1740.10">
    <property type="entry name" value="VC0467-like"/>
    <property type="match status" value="1"/>
</dbReference>
<dbReference type="Gene3D" id="3.30.70.1300">
    <property type="entry name" value="VC0467-like domains"/>
    <property type="match status" value="1"/>
</dbReference>
<dbReference type="HAMAP" id="MF_00758">
    <property type="entry name" value="UPF0301"/>
    <property type="match status" value="1"/>
</dbReference>
<dbReference type="InterPro" id="IPR003774">
    <property type="entry name" value="AlgH-like"/>
</dbReference>
<dbReference type="NCBIfam" id="NF001266">
    <property type="entry name" value="PRK00228.1-1"/>
    <property type="match status" value="1"/>
</dbReference>
<dbReference type="PANTHER" id="PTHR30327">
    <property type="entry name" value="UNCHARACTERIZED PROTEIN YQGE"/>
    <property type="match status" value="1"/>
</dbReference>
<dbReference type="PANTHER" id="PTHR30327:SF1">
    <property type="entry name" value="UPF0301 PROTEIN YQGE"/>
    <property type="match status" value="1"/>
</dbReference>
<dbReference type="Pfam" id="PF02622">
    <property type="entry name" value="DUF179"/>
    <property type="match status" value="1"/>
</dbReference>
<dbReference type="SUPFAM" id="SSF143456">
    <property type="entry name" value="VC0467-like"/>
    <property type="match status" value="1"/>
</dbReference>
<comment type="similarity">
    <text evidence="1">Belongs to the UPF0301 (AlgH) family.</text>
</comment>
<reference key="1">
    <citation type="submission" date="2008-04" db="EMBL/GenBank/DDBJ databases">
        <title>Complete sequence of Yersinia pseudotuberculosis PB1/+.</title>
        <authorList>
            <person name="Copeland A."/>
            <person name="Lucas S."/>
            <person name="Lapidus A."/>
            <person name="Glavina del Rio T."/>
            <person name="Dalin E."/>
            <person name="Tice H."/>
            <person name="Bruce D."/>
            <person name="Goodwin L."/>
            <person name="Pitluck S."/>
            <person name="Munk A.C."/>
            <person name="Brettin T."/>
            <person name="Detter J.C."/>
            <person name="Han C."/>
            <person name="Tapia R."/>
            <person name="Schmutz J."/>
            <person name="Larimer F."/>
            <person name="Land M."/>
            <person name="Hauser L."/>
            <person name="Challacombe J.F."/>
            <person name="Green L."/>
            <person name="Lindler L.E."/>
            <person name="Nikolich M.P."/>
            <person name="Richardson P."/>
        </authorList>
    </citation>
    <scope>NUCLEOTIDE SEQUENCE [LARGE SCALE GENOMIC DNA]</scope>
    <source>
        <strain>PB1/+</strain>
    </source>
</reference>
<evidence type="ECO:0000255" key="1">
    <source>
        <dbReference type="HAMAP-Rule" id="MF_00758"/>
    </source>
</evidence>
<gene>
    <name type="ordered locus">YPTS_3341</name>
</gene>
<accession>B2K0T3</accession>
<feature type="chain" id="PRO_1000198311" description="UPF0301 protein YPTS_3341">
    <location>
        <begin position="1"/>
        <end position="187"/>
    </location>
</feature>
<protein>
    <recommendedName>
        <fullName evidence="1">UPF0301 protein YPTS_3341</fullName>
    </recommendedName>
</protein>
<organism>
    <name type="scientific">Yersinia pseudotuberculosis serotype IB (strain PB1/+)</name>
    <dbReference type="NCBI Taxonomy" id="502801"/>
    <lineage>
        <taxon>Bacteria</taxon>
        <taxon>Pseudomonadati</taxon>
        <taxon>Pseudomonadota</taxon>
        <taxon>Gammaproteobacteria</taxon>
        <taxon>Enterobacterales</taxon>
        <taxon>Yersiniaceae</taxon>
        <taxon>Yersinia</taxon>
    </lineage>
</organism>
<sequence length="187" mass="20667">MNLQHHFLIAMPSLQDPQFKRSVIYICEHDEKGAMGLVINKPLEQLTVETILEKLKIKSPSRDPAIRLDNVVLAGGPLAEDRGFILHSPQEGFASSIHISPETMITTSKDVLETLGTSGQPKNLLVALGYASWRQGQLEQELLDNVWLTTEADTHILFNTPIAERWQAAANKLGINIFNIAPQAGHA</sequence>